<comment type="subunit">
    <text evidence="3 4">Interacts with MPC and PAB2.</text>
</comment>
<comment type="tissue specificity">
    <text evidence="4">Expressed in cauline leaves, stems, rosette leaves, immature siliques and primary inflorescences.</text>
</comment>
<comment type="domain">
    <text>Contains a PAM2-like motif, which seems to be involved in the binding to the PABC/CTC domain of PAB proteins.</text>
</comment>
<keyword id="KW-1185">Reference proteome</keyword>
<protein>
    <recommendedName>
        <fullName>Polyadenylate-binding protein-interacting protein 7</fullName>
        <shortName>PABP-interacting protein 7</shortName>
        <shortName>Poly(A)-binding protein-interacting protein 7</shortName>
    </recommendedName>
    <alternativeName>
        <fullName>PAM2-containing protein CID7</fullName>
    </alternativeName>
    <alternativeName>
        <fullName>Protein CTC-INTERACTING DOMAIN 7</fullName>
    </alternativeName>
</protein>
<gene>
    <name type="primary">CID7</name>
    <name type="ordered locus">At2g26280</name>
    <name type="ORF">T1D16.8</name>
</gene>
<reference key="1">
    <citation type="journal article" date="1999" name="Nature">
        <title>Sequence and analysis of chromosome 2 of the plant Arabidopsis thaliana.</title>
        <authorList>
            <person name="Lin X."/>
            <person name="Kaul S."/>
            <person name="Rounsley S.D."/>
            <person name="Shea T.P."/>
            <person name="Benito M.-I."/>
            <person name="Town C.D."/>
            <person name="Fujii C.Y."/>
            <person name="Mason T.M."/>
            <person name="Bowman C.L."/>
            <person name="Barnstead M.E."/>
            <person name="Feldblyum T.V."/>
            <person name="Buell C.R."/>
            <person name="Ketchum K.A."/>
            <person name="Lee J.J."/>
            <person name="Ronning C.M."/>
            <person name="Koo H.L."/>
            <person name="Moffat K.S."/>
            <person name="Cronin L.A."/>
            <person name="Shen M."/>
            <person name="Pai G."/>
            <person name="Van Aken S."/>
            <person name="Umayam L."/>
            <person name="Tallon L.J."/>
            <person name="Gill J.E."/>
            <person name="Adams M.D."/>
            <person name="Carrera A.J."/>
            <person name="Creasy T.H."/>
            <person name="Goodman H.M."/>
            <person name="Somerville C.R."/>
            <person name="Copenhaver G.P."/>
            <person name="Preuss D."/>
            <person name="Nierman W.C."/>
            <person name="White O."/>
            <person name="Eisen J.A."/>
            <person name="Salzberg S.L."/>
            <person name="Fraser C.M."/>
            <person name="Venter J.C."/>
        </authorList>
    </citation>
    <scope>NUCLEOTIDE SEQUENCE [LARGE SCALE GENOMIC DNA]</scope>
    <source>
        <strain>cv. Columbia</strain>
    </source>
</reference>
<reference key="2">
    <citation type="journal article" date="2017" name="Plant J.">
        <title>Araport11: a complete reannotation of the Arabidopsis thaliana reference genome.</title>
        <authorList>
            <person name="Cheng C.Y."/>
            <person name="Krishnakumar V."/>
            <person name="Chan A.P."/>
            <person name="Thibaud-Nissen F."/>
            <person name="Schobel S."/>
            <person name="Town C.D."/>
        </authorList>
    </citation>
    <scope>GENOME REANNOTATION</scope>
    <source>
        <strain>cv. Columbia</strain>
    </source>
</reference>
<reference key="3">
    <citation type="submission" date="2006-07" db="EMBL/GenBank/DDBJ databases">
        <title>Large-scale analysis of RIKEN Arabidopsis full-length (RAFL) cDNAs.</title>
        <authorList>
            <person name="Totoki Y."/>
            <person name="Seki M."/>
            <person name="Ishida J."/>
            <person name="Nakajima M."/>
            <person name="Enju A."/>
            <person name="Kamiya A."/>
            <person name="Narusaka M."/>
            <person name="Shin-i T."/>
            <person name="Nakagawa M."/>
            <person name="Sakamoto N."/>
            <person name="Oishi K."/>
            <person name="Kohara Y."/>
            <person name="Kobayashi M."/>
            <person name="Toyoda A."/>
            <person name="Sakaki Y."/>
            <person name="Sakurai T."/>
            <person name="Iida K."/>
            <person name="Akiyama K."/>
            <person name="Satou M."/>
            <person name="Toyoda T."/>
            <person name="Konagaya A."/>
            <person name="Carninci P."/>
            <person name="Kawai J."/>
            <person name="Hayashizaki Y."/>
            <person name="Shinozaki K."/>
        </authorList>
    </citation>
    <scope>NUCLEOTIDE SEQUENCE [LARGE SCALE MRNA]</scope>
    <source>
        <strain>cv. Columbia</strain>
    </source>
</reference>
<reference key="4">
    <citation type="submission" date="2007-03" db="EMBL/GenBank/DDBJ databases">
        <title>Arabidopsis ORF clones.</title>
        <authorList>
            <person name="Bautista V.R."/>
            <person name="Kim C.J."/>
            <person name="Chen H."/>
            <person name="Wu S.Y."/>
            <person name="De Los Reyes C."/>
            <person name="Ecker J.R."/>
        </authorList>
    </citation>
    <scope>NUCLEOTIDE SEQUENCE [LARGE SCALE MRNA]</scope>
    <source>
        <strain>cv. Columbia</strain>
    </source>
</reference>
<reference key="5">
    <citation type="journal article" date="2005" name="Mol. Genet. Genomics">
        <title>Four distinct classes of proteins as interaction partners of the PABC domain of Arabidopsis thaliana Poly(A)-binding proteins.</title>
        <authorList>
            <person name="Bravo J."/>
            <person name="Aguilar-Henonin L."/>
            <person name="Olmedo G."/>
            <person name="Guzman P."/>
        </authorList>
    </citation>
    <scope>GENE FAMILY</scope>
    <scope>PAM2 MOTIF</scope>
    <scope>INTERACTION WITH PAB2</scope>
</reference>
<reference key="6">
    <citation type="journal article" date="2008" name="Plant Cell">
        <title>MATERNALLY EXPRESSED PAB C-TERMINAL, a novel imprinted gene in Arabidopsis, encodes the conserved C-terminal domain of polyadenylate binding proteins.</title>
        <authorList>
            <person name="Tiwari S."/>
            <person name="Schulz R."/>
            <person name="Ikeda Y."/>
            <person name="Dytham L."/>
            <person name="Bravo J."/>
            <person name="Mathers L."/>
            <person name="Spielman M."/>
            <person name="Guzman P."/>
            <person name="Oakey R.J."/>
            <person name="Kinoshita T."/>
            <person name="Scott R.J."/>
        </authorList>
    </citation>
    <scope>INTERACTION WITH MPC</scope>
    <scope>TISSUE SPECIFICITY</scope>
</reference>
<reference key="7">
    <citation type="journal article" date="2009" name="Plant Physiol.">
        <title>Large-scale Arabidopsis phosphoproteome profiling reveals novel chloroplast kinase substrates and phosphorylation networks.</title>
        <authorList>
            <person name="Reiland S."/>
            <person name="Messerli G."/>
            <person name="Baerenfaller K."/>
            <person name="Gerrits B."/>
            <person name="Endler A."/>
            <person name="Grossmann J."/>
            <person name="Gruissem W."/>
            <person name="Baginsky S."/>
        </authorList>
    </citation>
    <scope>IDENTIFICATION BY MASS SPECTROMETRY [LARGE SCALE ANALYSIS]</scope>
</reference>
<proteinExistence type="evidence at protein level"/>
<dbReference type="EMBL" id="AC004484">
    <property type="protein sequence ID" value="AAC14523.1"/>
    <property type="molecule type" value="Genomic_DNA"/>
</dbReference>
<dbReference type="EMBL" id="CP002685">
    <property type="protein sequence ID" value="AEC07818.1"/>
    <property type="molecule type" value="Genomic_DNA"/>
</dbReference>
<dbReference type="EMBL" id="CP002685">
    <property type="protein sequence ID" value="ANM62763.1"/>
    <property type="molecule type" value="Genomic_DNA"/>
</dbReference>
<dbReference type="EMBL" id="AK228618">
    <property type="protein sequence ID" value="BAF00529.1"/>
    <property type="molecule type" value="mRNA"/>
</dbReference>
<dbReference type="EMBL" id="BT030338">
    <property type="protein sequence ID" value="ABO38751.1"/>
    <property type="molecule type" value="mRNA"/>
</dbReference>
<dbReference type="PIR" id="E84658">
    <property type="entry name" value="E84658"/>
</dbReference>
<dbReference type="RefSeq" id="NP_001324896.1">
    <property type="nucleotide sequence ID" value="NM_001336050.1"/>
</dbReference>
<dbReference type="RefSeq" id="NP_180196.1">
    <property type="nucleotide sequence ID" value="NM_128185.3"/>
</dbReference>
<dbReference type="SMR" id="O64843"/>
<dbReference type="BioGRID" id="2520">
    <property type="interactions" value="6"/>
</dbReference>
<dbReference type="FunCoup" id="O64843">
    <property type="interactions" value="881"/>
</dbReference>
<dbReference type="IntAct" id="O64843">
    <property type="interactions" value="2"/>
</dbReference>
<dbReference type="STRING" id="3702.O64843"/>
<dbReference type="GlyGen" id="O64843">
    <property type="glycosylation" value="1 site, 1 O-linked glycan (1 site)"/>
</dbReference>
<dbReference type="iPTMnet" id="O64843"/>
<dbReference type="PaxDb" id="3702-AT2G26280.1"/>
<dbReference type="ProteomicsDB" id="246941"/>
<dbReference type="EnsemblPlants" id="AT2G26280.1">
    <property type="protein sequence ID" value="AT2G26280.1"/>
    <property type="gene ID" value="AT2G26280"/>
</dbReference>
<dbReference type="EnsemblPlants" id="AT2G26280.3">
    <property type="protein sequence ID" value="AT2G26280.3"/>
    <property type="gene ID" value="AT2G26280"/>
</dbReference>
<dbReference type="GeneID" id="817168"/>
<dbReference type="Gramene" id="AT2G26280.1">
    <property type="protein sequence ID" value="AT2G26280.1"/>
    <property type="gene ID" value="AT2G26280"/>
</dbReference>
<dbReference type="Gramene" id="AT2G26280.3">
    <property type="protein sequence ID" value="AT2G26280.3"/>
    <property type="gene ID" value="AT2G26280"/>
</dbReference>
<dbReference type="KEGG" id="ath:AT2G26280"/>
<dbReference type="Araport" id="AT2G26280"/>
<dbReference type="TAIR" id="AT2G26280">
    <property type="gene designation" value="CID7"/>
</dbReference>
<dbReference type="eggNOG" id="KOG2401">
    <property type="taxonomic scope" value="Eukaryota"/>
</dbReference>
<dbReference type="HOGENOM" id="CLU_040596_0_0_1"/>
<dbReference type="InParanoid" id="O64843"/>
<dbReference type="OMA" id="YFSADEC"/>
<dbReference type="PhylomeDB" id="O64843"/>
<dbReference type="PRO" id="PR:O64843"/>
<dbReference type="Proteomes" id="UP000006548">
    <property type="component" value="Chromosome 2"/>
</dbReference>
<dbReference type="ExpressionAtlas" id="O64843">
    <property type="expression patterns" value="baseline and differential"/>
</dbReference>
<dbReference type="GO" id="GO:0003729">
    <property type="term" value="F:mRNA binding"/>
    <property type="evidence" value="ECO:0007005"/>
    <property type="project" value="TAIR"/>
</dbReference>
<dbReference type="CDD" id="cd14371">
    <property type="entry name" value="CUE_CID7_like"/>
    <property type="match status" value="1"/>
</dbReference>
<dbReference type="FunFam" id="3.30.1370.110:FF:000009">
    <property type="entry name" value="Polyadenylate-binding protein-interacting protein 7"/>
    <property type="match status" value="1"/>
</dbReference>
<dbReference type="Gene3D" id="3.30.1370.110">
    <property type="match status" value="1"/>
</dbReference>
<dbReference type="InterPro" id="IPR041806">
    <property type="entry name" value="CID5/6/7_CUE"/>
</dbReference>
<dbReference type="InterPro" id="IPR013899">
    <property type="entry name" value="DUF1771"/>
</dbReference>
<dbReference type="InterPro" id="IPR053242">
    <property type="entry name" value="PAM2-like_domain"/>
</dbReference>
<dbReference type="InterPro" id="IPR002625">
    <property type="entry name" value="Smr_dom"/>
</dbReference>
<dbReference type="InterPro" id="IPR036063">
    <property type="entry name" value="Smr_dom_sf"/>
</dbReference>
<dbReference type="PANTHER" id="PTHR46651">
    <property type="entry name" value="POLYADENYLATE-BINDING PROTEIN-INTERACTING PROTEIN 7"/>
    <property type="match status" value="1"/>
</dbReference>
<dbReference type="PANTHER" id="PTHR46651:SF1">
    <property type="entry name" value="SMALL MUTS RELATED FAMILY PROTEIN"/>
    <property type="match status" value="1"/>
</dbReference>
<dbReference type="Pfam" id="PF08590">
    <property type="entry name" value="DUF1771"/>
    <property type="match status" value="1"/>
</dbReference>
<dbReference type="SMART" id="SM01162">
    <property type="entry name" value="DUF1771"/>
    <property type="match status" value="1"/>
</dbReference>
<dbReference type="SMART" id="SM00463">
    <property type="entry name" value="SMR"/>
    <property type="match status" value="1"/>
</dbReference>
<dbReference type="SUPFAM" id="SSF160443">
    <property type="entry name" value="SMR domain-like"/>
    <property type="match status" value="1"/>
</dbReference>
<dbReference type="PROSITE" id="PS50828">
    <property type="entry name" value="SMR"/>
    <property type="match status" value="1"/>
</dbReference>
<evidence type="ECO:0000255" key="1">
    <source>
        <dbReference type="PROSITE-ProRule" id="PRU00321"/>
    </source>
</evidence>
<evidence type="ECO:0000256" key="2">
    <source>
        <dbReference type="SAM" id="MobiDB-lite"/>
    </source>
</evidence>
<evidence type="ECO:0000269" key="3">
    <source>
    </source>
</evidence>
<evidence type="ECO:0000269" key="4">
    <source>
    </source>
</evidence>
<evidence type="ECO:0000305" key="5"/>
<organism>
    <name type="scientific">Arabidopsis thaliana</name>
    <name type="common">Mouse-ear cress</name>
    <dbReference type="NCBI Taxonomy" id="3702"/>
    <lineage>
        <taxon>Eukaryota</taxon>
        <taxon>Viridiplantae</taxon>
        <taxon>Streptophyta</taxon>
        <taxon>Embryophyta</taxon>
        <taxon>Tracheophyta</taxon>
        <taxon>Spermatophyta</taxon>
        <taxon>Magnoliopsida</taxon>
        <taxon>eudicotyledons</taxon>
        <taxon>Gunneridae</taxon>
        <taxon>Pentapetalae</taxon>
        <taxon>rosids</taxon>
        <taxon>malvids</taxon>
        <taxon>Brassicales</taxon>
        <taxon>Brassicaceae</taxon>
        <taxon>Camelineae</taxon>
        <taxon>Arabidopsis</taxon>
    </lineage>
</organism>
<sequence length="567" mass="62147">MSLTKKASEPKLSGTSIKPTTLNPHAAEFVPFTLRSPSSGGTSTLDTRLLASSSSVGKAVLDRTESSASHHSDEEARQFWSHQLPDDITPDFGLMTQDDNSYGSGSLSLANLSLFDGNEAEKFPSASGGYGFSDQTGLASHNANGNSLADKSRYPISSFGEDPQRQSFMQLSPKPWDKQIMNAEQLLGNDRERNPFSGKSRHGFVNDMITESPGDMEVNPVDFLASQFPGFAAESLAEVYFANGCDLQLTIEMLTQLELQVDGGLNQNISPKTYAPPSLTPMDFPALSISNSHGIPAQFGGDDLQQTGNHYQSPEKDNMFFFKSGPSVSQPGAIDYVSAVRKLASQDSGMWKYERNDSADSSIGSSRNSGAYKSGRGRSIYSDKLQSRAQTRPAPVWVETGDAVGNMYSELREEARDYARLRNVYFEQARQAYLVGNKALAKELSVKGQLHNMQMKAAHGKAQEAIYRQRNPVGQGNSRGNERMIDLHGLHVSEALQVLKHELSVLRSTARATQERLQIYICVGTGHHTRGSRTPARLPVAVQRYLLEEEGLDYSEPQAGLLRVIIY</sequence>
<name>CID7_ARATH</name>
<accession>O64843</accession>
<accession>Q0WQS0</accession>
<feature type="chain" id="PRO_0000422641" description="Polyadenylate-binding protein-interacting protein 7">
    <location>
        <begin position="1"/>
        <end position="567"/>
    </location>
</feature>
<feature type="domain" description="CUE">
    <location>
        <begin position="215"/>
        <end position="259"/>
    </location>
</feature>
<feature type="domain" description="Smr" evidence="1">
    <location>
        <begin position="485"/>
        <end position="567"/>
    </location>
</feature>
<feature type="region of interest" description="Disordered" evidence="2">
    <location>
        <begin position="1"/>
        <end position="22"/>
    </location>
</feature>
<feature type="region of interest" description="Disordered" evidence="2">
    <location>
        <begin position="355"/>
        <end position="387"/>
    </location>
</feature>
<feature type="short sequence motif" description="PAM2-like">
    <location>
        <begin position="21"/>
        <end position="31"/>
    </location>
</feature>
<feature type="compositionally biased region" description="Polar residues" evidence="2">
    <location>
        <begin position="13"/>
        <end position="22"/>
    </location>
</feature>
<feature type="compositionally biased region" description="Polar residues" evidence="2">
    <location>
        <begin position="359"/>
        <end position="371"/>
    </location>
</feature>
<feature type="sequence conflict" description="In Ref. 3; BAF00529." evidence="5" ref="3">
    <original>K</original>
    <variation>E</variation>
    <location>
        <position position="500"/>
    </location>
</feature>